<accession>Q9W2N0</accession>
<protein>
    <recommendedName>
        <fullName>F-actin-capping protein subunit alpha</fullName>
    </recommendedName>
</protein>
<keyword id="KW-0117">Actin capping</keyword>
<keyword id="KW-0009">Actin-binding</keyword>
<keyword id="KW-0963">Cytoplasm</keyword>
<keyword id="KW-0206">Cytoskeleton</keyword>
<keyword id="KW-1185">Reference proteome</keyword>
<evidence type="ECO:0000250" key="1"/>
<evidence type="ECO:0000250" key="2">
    <source>
        <dbReference type="UniProtKB" id="A0PFK5"/>
    </source>
</evidence>
<evidence type="ECO:0000305" key="3"/>
<gene>
    <name type="primary">cpa</name>
    <name type="ORF">CG10540</name>
</gene>
<comment type="function">
    <text evidence="1">F-actin-capping proteins bind in a Ca(2+)-independent manner to the fast growing ends of actin filaments (barbed end) thereby blocking the exchange of subunits at these ends. Unlike other capping proteins (such as gelsolin and severin), these proteins do not sever actin filaments (By similarity).</text>
</comment>
<comment type="subunit">
    <text evidence="1">Component of the F-actin capping complex, composed of a heterodimer of an alpha and a beta subunit.</text>
</comment>
<comment type="interaction">
    <interactant intactId="EBI-173404">
        <id>Q9W2N0</id>
    </interactant>
    <interactant intactId="EBI-95160">
        <id>P48603</id>
        <label>cpb</label>
    </interactant>
    <organismsDiffer>false</organismsDiffer>
    <experiments>3</experiments>
</comment>
<comment type="subcellular location">
    <subcellularLocation>
        <location evidence="2">Cytoplasm</location>
        <location evidence="2">Cytoskeleton</location>
    </subcellularLocation>
</comment>
<comment type="similarity">
    <text evidence="3">Belongs to the F-actin-capping protein alpha subunit family.</text>
</comment>
<proteinExistence type="evidence at protein level"/>
<organism>
    <name type="scientific">Drosophila melanogaster</name>
    <name type="common">Fruit fly</name>
    <dbReference type="NCBI Taxonomy" id="7227"/>
    <lineage>
        <taxon>Eukaryota</taxon>
        <taxon>Metazoa</taxon>
        <taxon>Ecdysozoa</taxon>
        <taxon>Arthropoda</taxon>
        <taxon>Hexapoda</taxon>
        <taxon>Insecta</taxon>
        <taxon>Pterygota</taxon>
        <taxon>Neoptera</taxon>
        <taxon>Endopterygota</taxon>
        <taxon>Diptera</taxon>
        <taxon>Brachycera</taxon>
        <taxon>Muscomorpha</taxon>
        <taxon>Ephydroidea</taxon>
        <taxon>Drosophilidae</taxon>
        <taxon>Drosophila</taxon>
        <taxon>Sophophora</taxon>
    </lineage>
</organism>
<dbReference type="EMBL" id="AE013599">
    <property type="protein sequence ID" value="AAF46660.1"/>
    <property type="molecule type" value="Genomic_DNA"/>
</dbReference>
<dbReference type="EMBL" id="AY069084">
    <property type="protein sequence ID" value="AAL39229.1"/>
    <property type="molecule type" value="mRNA"/>
</dbReference>
<dbReference type="RefSeq" id="NP_611539.1">
    <property type="nucleotide sequence ID" value="NM_137695.4"/>
</dbReference>
<dbReference type="SMR" id="Q9W2N0"/>
<dbReference type="BioGRID" id="63026">
    <property type="interactions" value="39"/>
</dbReference>
<dbReference type="ComplexPortal" id="CPX-2434">
    <property type="entry name" value="Dynactin complex"/>
</dbReference>
<dbReference type="ComplexPortal" id="CPX-2828">
    <property type="entry name" value="F-actin capping protein complex"/>
</dbReference>
<dbReference type="DIP" id="DIP-18409N"/>
<dbReference type="FunCoup" id="Q9W2N0">
    <property type="interactions" value="1615"/>
</dbReference>
<dbReference type="IntAct" id="Q9W2N0">
    <property type="interactions" value="50"/>
</dbReference>
<dbReference type="STRING" id="7227.FBpp0071461"/>
<dbReference type="PaxDb" id="7227-FBpp0071461"/>
<dbReference type="DNASU" id="37387"/>
<dbReference type="EnsemblMetazoa" id="FBtr0071532">
    <property type="protein sequence ID" value="FBpp0071461"/>
    <property type="gene ID" value="FBgn0034577"/>
</dbReference>
<dbReference type="GeneID" id="37387"/>
<dbReference type="KEGG" id="dme:Dmel_CG10540"/>
<dbReference type="AGR" id="FB:FBgn0289712"/>
<dbReference type="CTD" id="37387"/>
<dbReference type="FlyBase" id="FBgn0289712">
    <property type="gene designation" value="cpa"/>
</dbReference>
<dbReference type="VEuPathDB" id="VectorBase:FBgn0034577"/>
<dbReference type="eggNOG" id="KOG0836">
    <property type="taxonomic scope" value="Eukaryota"/>
</dbReference>
<dbReference type="GeneTree" id="ENSGT00950000183119"/>
<dbReference type="HOGENOM" id="CLU_045161_0_0_1"/>
<dbReference type="InParanoid" id="Q9W2N0"/>
<dbReference type="OMA" id="VACIEDH"/>
<dbReference type="OrthoDB" id="340550at2759"/>
<dbReference type="PhylomeDB" id="Q9W2N0"/>
<dbReference type="Reactome" id="R-DME-3371497">
    <property type="pathway name" value="HSP90 chaperone cycle for steroid hormone receptors (SHR) in the presence of ligand"/>
</dbReference>
<dbReference type="Reactome" id="R-DME-6807878">
    <property type="pathway name" value="COPI-mediated anterograde transport"/>
</dbReference>
<dbReference type="Reactome" id="R-DME-6811436">
    <property type="pathway name" value="COPI-independent Golgi-to-ER retrograde traffic"/>
</dbReference>
<dbReference type="Reactome" id="R-DME-983231">
    <property type="pathway name" value="Factors involved in megakaryocyte development and platelet production"/>
</dbReference>
<dbReference type="SignaLink" id="Q9W2N0"/>
<dbReference type="BioGRID-ORCS" id="37387">
    <property type="hits" value="0 hits in 3 CRISPR screens"/>
</dbReference>
<dbReference type="ChiTaRS" id="cpa">
    <property type="organism name" value="fly"/>
</dbReference>
<dbReference type="GenomeRNAi" id="37387"/>
<dbReference type="PRO" id="PR:Q9W2N0"/>
<dbReference type="Proteomes" id="UP000000803">
    <property type="component" value="Chromosome 2R"/>
</dbReference>
<dbReference type="Bgee" id="FBgn0034577">
    <property type="expression patterns" value="Expressed in embryonic/larval hemocyte (Drosophila) and 161 other cell types or tissues"/>
</dbReference>
<dbReference type="GO" id="GO:0016324">
    <property type="term" value="C:apical plasma membrane"/>
    <property type="evidence" value="ECO:0000314"/>
    <property type="project" value="FlyBase"/>
</dbReference>
<dbReference type="GO" id="GO:0008290">
    <property type="term" value="C:F-actin capping protein complex"/>
    <property type="evidence" value="ECO:0000314"/>
    <property type="project" value="FlyBase"/>
</dbReference>
<dbReference type="GO" id="GO:0071203">
    <property type="term" value="C:WASH complex"/>
    <property type="evidence" value="ECO:0000250"/>
    <property type="project" value="FlyBase"/>
</dbReference>
<dbReference type="GO" id="GO:0030018">
    <property type="term" value="C:Z disc"/>
    <property type="evidence" value="ECO:0000314"/>
    <property type="project" value="FlyBase"/>
</dbReference>
<dbReference type="GO" id="GO:0003779">
    <property type="term" value="F:actin binding"/>
    <property type="evidence" value="ECO:0007669"/>
    <property type="project" value="UniProtKB-KW"/>
</dbReference>
<dbReference type="GO" id="GO:0046982">
    <property type="term" value="F:protein heterodimerization activity"/>
    <property type="evidence" value="ECO:0000353"/>
    <property type="project" value="FlyBase"/>
</dbReference>
<dbReference type="GO" id="GO:0030036">
    <property type="term" value="P:actin cytoskeleton organization"/>
    <property type="evidence" value="ECO:0000315"/>
    <property type="project" value="FlyBase"/>
</dbReference>
<dbReference type="GO" id="GO:0007015">
    <property type="term" value="P:actin filament organization"/>
    <property type="evidence" value="ECO:0000315"/>
    <property type="project" value="FlyBase"/>
</dbReference>
<dbReference type="GO" id="GO:0051016">
    <property type="term" value="P:barbed-end actin filament capping"/>
    <property type="evidence" value="ECO:0000315"/>
    <property type="project" value="FlyBase"/>
</dbReference>
<dbReference type="GO" id="GO:0007294">
    <property type="term" value="P:germarium-derived oocyte fate determination"/>
    <property type="evidence" value="ECO:0000315"/>
    <property type="project" value="FlyBase"/>
</dbReference>
<dbReference type="GO" id="GO:0030837">
    <property type="term" value="P:negative regulation of actin filament polymerization"/>
    <property type="evidence" value="ECO:0000315"/>
    <property type="project" value="FlyBase"/>
</dbReference>
<dbReference type="GO" id="GO:0051490">
    <property type="term" value="P:negative regulation of filopodium assembly"/>
    <property type="evidence" value="ECO:0000315"/>
    <property type="project" value="FlyBase"/>
</dbReference>
<dbReference type="GO" id="GO:0046329">
    <property type="term" value="P:negative regulation of JNK cascade"/>
    <property type="evidence" value="ECO:0000316"/>
    <property type="project" value="FlyBase"/>
</dbReference>
<dbReference type="GO" id="GO:0140591">
    <property type="term" value="P:nuclear envelope budding"/>
    <property type="evidence" value="ECO:0000315"/>
    <property type="project" value="FlyBase"/>
</dbReference>
<dbReference type="GO" id="GO:0051491">
    <property type="term" value="P:positive regulation of filopodium assembly"/>
    <property type="evidence" value="ECO:0000314"/>
    <property type="project" value="FlyBase"/>
</dbReference>
<dbReference type="GO" id="GO:0051489">
    <property type="term" value="P:regulation of filopodium assembly"/>
    <property type="evidence" value="ECO:0000315"/>
    <property type="project" value="FlyBase"/>
</dbReference>
<dbReference type="GO" id="GO:0010591">
    <property type="term" value="P:regulation of lamellipodium assembly"/>
    <property type="evidence" value="ECO:0000315"/>
    <property type="project" value="FlyBase"/>
</dbReference>
<dbReference type="GO" id="GO:0035220">
    <property type="term" value="P:wing disc development"/>
    <property type="evidence" value="ECO:0000315"/>
    <property type="project" value="FlyBase"/>
</dbReference>
<dbReference type="FunFam" id="3.30.1140.60:FF:000001">
    <property type="entry name" value="F-actin-capping protein subunit alpha"/>
    <property type="match status" value="1"/>
</dbReference>
<dbReference type="FunFam" id="3.90.1150.210:FF:000003">
    <property type="entry name" value="F-actin-capping protein subunit alpha"/>
    <property type="match status" value="1"/>
</dbReference>
<dbReference type="Gene3D" id="3.30.1140.60">
    <property type="entry name" value="F-actin capping protein, alpha subunit"/>
    <property type="match status" value="1"/>
</dbReference>
<dbReference type="Gene3D" id="3.90.1150.210">
    <property type="entry name" value="F-actin capping protein, beta subunit"/>
    <property type="match status" value="1"/>
</dbReference>
<dbReference type="InterPro" id="IPR002189">
    <property type="entry name" value="CapZ_alpha"/>
</dbReference>
<dbReference type="InterPro" id="IPR037282">
    <property type="entry name" value="CapZ_alpha/beta"/>
</dbReference>
<dbReference type="InterPro" id="IPR042276">
    <property type="entry name" value="CapZ_alpha/beta_2"/>
</dbReference>
<dbReference type="InterPro" id="IPR042489">
    <property type="entry name" value="CapZ_alpha_1"/>
</dbReference>
<dbReference type="InterPro" id="IPR017865">
    <property type="entry name" value="F-actin_cap_asu_CS"/>
</dbReference>
<dbReference type="PANTHER" id="PTHR10653">
    <property type="entry name" value="F-ACTIN-CAPPING PROTEIN SUBUNIT ALPHA"/>
    <property type="match status" value="1"/>
</dbReference>
<dbReference type="PANTHER" id="PTHR10653:SF0">
    <property type="entry name" value="F-ACTIN-CAPPING PROTEIN SUBUNIT ALPHA"/>
    <property type="match status" value="1"/>
</dbReference>
<dbReference type="Pfam" id="PF01267">
    <property type="entry name" value="F-actin_cap_A"/>
    <property type="match status" value="1"/>
</dbReference>
<dbReference type="PRINTS" id="PR00191">
    <property type="entry name" value="FACTINCAPA"/>
</dbReference>
<dbReference type="SUPFAM" id="SSF90096">
    <property type="entry name" value="Subunits of heterodimeric actin filament capping protein Capz"/>
    <property type="match status" value="1"/>
</dbReference>
<dbReference type="PROSITE" id="PS00748">
    <property type="entry name" value="F_ACTIN_CAPPING_A_1"/>
    <property type="match status" value="1"/>
</dbReference>
<dbReference type="PROSITE" id="PS00749">
    <property type="entry name" value="F_ACTIN_CAPPING_A_2"/>
    <property type="match status" value="1"/>
</dbReference>
<feature type="chain" id="PRO_0000208639" description="F-actin-capping protein subunit alpha">
    <location>
        <begin position="1"/>
        <end position="286"/>
    </location>
</feature>
<reference key="1">
    <citation type="journal article" date="2000" name="Science">
        <title>The genome sequence of Drosophila melanogaster.</title>
        <authorList>
            <person name="Adams M.D."/>
            <person name="Celniker S.E."/>
            <person name="Holt R.A."/>
            <person name="Evans C.A."/>
            <person name="Gocayne J.D."/>
            <person name="Amanatides P.G."/>
            <person name="Scherer S.E."/>
            <person name="Li P.W."/>
            <person name="Hoskins R.A."/>
            <person name="Galle R.F."/>
            <person name="George R.A."/>
            <person name="Lewis S.E."/>
            <person name="Richards S."/>
            <person name="Ashburner M."/>
            <person name="Henderson S.N."/>
            <person name="Sutton G.G."/>
            <person name="Wortman J.R."/>
            <person name="Yandell M.D."/>
            <person name="Zhang Q."/>
            <person name="Chen L.X."/>
            <person name="Brandon R.C."/>
            <person name="Rogers Y.-H.C."/>
            <person name="Blazej R.G."/>
            <person name="Champe M."/>
            <person name="Pfeiffer B.D."/>
            <person name="Wan K.H."/>
            <person name="Doyle C."/>
            <person name="Baxter E.G."/>
            <person name="Helt G."/>
            <person name="Nelson C.R."/>
            <person name="Miklos G.L.G."/>
            <person name="Abril J.F."/>
            <person name="Agbayani A."/>
            <person name="An H.-J."/>
            <person name="Andrews-Pfannkoch C."/>
            <person name="Baldwin D."/>
            <person name="Ballew R.M."/>
            <person name="Basu A."/>
            <person name="Baxendale J."/>
            <person name="Bayraktaroglu L."/>
            <person name="Beasley E.M."/>
            <person name="Beeson K.Y."/>
            <person name="Benos P.V."/>
            <person name="Berman B.P."/>
            <person name="Bhandari D."/>
            <person name="Bolshakov S."/>
            <person name="Borkova D."/>
            <person name="Botchan M.R."/>
            <person name="Bouck J."/>
            <person name="Brokstein P."/>
            <person name="Brottier P."/>
            <person name="Burtis K.C."/>
            <person name="Busam D.A."/>
            <person name="Butler H."/>
            <person name="Cadieu E."/>
            <person name="Center A."/>
            <person name="Chandra I."/>
            <person name="Cherry J.M."/>
            <person name="Cawley S."/>
            <person name="Dahlke C."/>
            <person name="Davenport L.B."/>
            <person name="Davies P."/>
            <person name="de Pablos B."/>
            <person name="Delcher A."/>
            <person name="Deng Z."/>
            <person name="Mays A.D."/>
            <person name="Dew I."/>
            <person name="Dietz S.M."/>
            <person name="Dodson K."/>
            <person name="Doup L.E."/>
            <person name="Downes M."/>
            <person name="Dugan-Rocha S."/>
            <person name="Dunkov B.C."/>
            <person name="Dunn P."/>
            <person name="Durbin K.J."/>
            <person name="Evangelista C.C."/>
            <person name="Ferraz C."/>
            <person name="Ferriera S."/>
            <person name="Fleischmann W."/>
            <person name="Fosler C."/>
            <person name="Gabrielian A.E."/>
            <person name="Garg N.S."/>
            <person name="Gelbart W.M."/>
            <person name="Glasser K."/>
            <person name="Glodek A."/>
            <person name="Gong F."/>
            <person name="Gorrell J.H."/>
            <person name="Gu Z."/>
            <person name="Guan P."/>
            <person name="Harris M."/>
            <person name="Harris N.L."/>
            <person name="Harvey D.A."/>
            <person name="Heiman T.J."/>
            <person name="Hernandez J.R."/>
            <person name="Houck J."/>
            <person name="Hostin D."/>
            <person name="Houston K.A."/>
            <person name="Howland T.J."/>
            <person name="Wei M.-H."/>
            <person name="Ibegwam C."/>
            <person name="Jalali M."/>
            <person name="Kalush F."/>
            <person name="Karpen G.H."/>
            <person name="Ke Z."/>
            <person name="Kennison J.A."/>
            <person name="Ketchum K.A."/>
            <person name="Kimmel B.E."/>
            <person name="Kodira C.D."/>
            <person name="Kraft C.L."/>
            <person name="Kravitz S."/>
            <person name="Kulp D."/>
            <person name="Lai Z."/>
            <person name="Lasko P."/>
            <person name="Lei Y."/>
            <person name="Levitsky A.A."/>
            <person name="Li J.H."/>
            <person name="Li Z."/>
            <person name="Liang Y."/>
            <person name="Lin X."/>
            <person name="Liu X."/>
            <person name="Mattei B."/>
            <person name="McIntosh T.C."/>
            <person name="McLeod M.P."/>
            <person name="McPherson D."/>
            <person name="Merkulov G."/>
            <person name="Milshina N.V."/>
            <person name="Mobarry C."/>
            <person name="Morris J."/>
            <person name="Moshrefi A."/>
            <person name="Mount S.M."/>
            <person name="Moy M."/>
            <person name="Murphy B."/>
            <person name="Murphy L."/>
            <person name="Muzny D.M."/>
            <person name="Nelson D.L."/>
            <person name="Nelson D.R."/>
            <person name="Nelson K.A."/>
            <person name="Nixon K."/>
            <person name="Nusskern D.R."/>
            <person name="Pacleb J.M."/>
            <person name="Palazzolo M."/>
            <person name="Pittman G.S."/>
            <person name="Pan S."/>
            <person name="Pollard J."/>
            <person name="Puri V."/>
            <person name="Reese M.G."/>
            <person name="Reinert K."/>
            <person name="Remington K."/>
            <person name="Saunders R.D.C."/>
            <person name="Scheeler F."/>
            <person name="Shen H."/>
            <person name="Shue B.C."/>
            <person name="Siden-Kiamos I."/>
            <person name="Simpson M."/>
            <person name="Skupski M.P."/>
            <person name="Smith T.J."/>
            <person name="Spier E."/>
            <person name="Spradling A.C."/>
            <person name="Stapleton M."/>
            <person name="Strong R."/>
            <person name="Sun E."/>
            <person name="Svirskas R."/>
            <person name="Tector C."/>
            <person name="Turner R."/>
            <person name="Venter E."/>
            <person name="Wang A.H."/>
            <person name="Wang X."/>
            <person name="Wang Z.-Y."/>
            <person name="Wassarman D.A."/>
            <person name="Weinstock G.M."/>
            <person name="Weissenbach J."/>
            <person name="Williams S.M."/>
            <person name="Woodage T."/>
            <person name="Worley K.C."/>
            <person name="Wu D."/>
            <person name="Yang S."/>
            <person name="Yao Q.A."/>
            <person name="Ye J."/>
            <person name="Yeh R.-F."/>
            <person name="Zaveri J.S."/>
            <person name="Zhan M."/>
            <person name="Zhang G."/>
            <person name="Zhao Q."/>
            <person name="Zheng L."/>
            <person name="Zheng X.H."/>
            <person name="Zhong F.N."/>
            <person name="Zhong W."/>
            <person name="Zhou X."/>
            <person name="Zhu S.C."/>
            <person name="Zhu X."/>
            <person name="Smith H.O."/>
            <person name="Gibbs R.A."/>
            <person name="Myers E.W."/>
            <person name="Rubin G.M."/>
            <person name="Venter J.C."/>
        </authorList>
    </citation>
    <scope>NUCLEOTIDE SEQUENCE [LARGE SCALE GENOMIC DNA]</scope>
    <source>
        <strain>Berkeley</strain>
    </source>
</reference>
<reference key="2">
    <citation type="journal article" date="2002" name="Genome Biol.">
        <title>Annotation of the Drosophila melanogaster euchromatic genome: a systematic review.</title>
        <authorList>
            <person name="Misra S."/>
            <person name="Crosby M.A."/>
            <person name="Mungall C.J."/>
            <person name="Matthews B.B."/>
            <person name="Campbell K.S."/>
            <person name="Hradecky P."/>
            <person name="Huang Y."/>
            <person name="Kaminker J.S."/>
            <person name="Millburn G.H."/>
            <person name="Prochnik S.E."/>
            <person name="Smith C.D."/>
            <person name="Tupy J.L."/>
            <person name="Whitfield E.J."/>
            <person name="Bayraktaroglu L."/>
            <person name="Berman B.P."/>
            <person name="Bettencourt B.R."/>
            <person name="Celniker S.E."/>
            <person name="de Grey A.D.N.J."/>
            <person name="Drysdale R.A."/>
            <person name="Harris N.L."/>
            <person name="Richter J."/>
            <person name="Russo S."/>
            <person name="Schroeder A.J."/>
            <person name="Shu S.Q."/>
            <person name="Stapleton M."/>
            <person name="Yamada C."/>
            <person name="Ashburner M."/>
            <person name="Gelbart W.M."/>
            <person name="Rubin G.M."/>
            <person name="Lewis S.E."/>
        </authorList>
    </citation>
    <scope>GENOME REANNOTATION</scope>
    <source>
        <strain>Berkeley</strain>
    </source>
</reference>
<reference key="3">
    <citation type="journal article" date="2002" name="Genome Biol.">
        <title>A Drosophila full-length cDNA resource.</title>
        <authorList>
            <person name="Stapleton M."/>
            <person name="Carlson J.W."/>
            <person name="Brokstein P."/>
            <person name="Yu C."/>
            <person name="Champe M."/>
            <person name="George R.A."/>
            <person name="Guarin H."/>
            <person name="Kronmiller B."/>
            <person name="Pacleb J.M."/>
            <person name="Park S."/>
            <person name="Wan K.H."/>
            <person name="Rubin G.M."/>
            <person name="Celniker S.E."/>
        </authorList>
    </citation>
    <scope>NUCLEOTIDE SEQUENCE [LARGE SCALE MRNA]</scope>
    <source>
        <strain>Berkeley</strain>
        <tissue>Head</tissue>
    </source>
</reference>
<name>CAPZA_DROME</name>
<sequence>MEQTPITDAEKVRIVSDFILHAPPGEFNEVFNDVRELLKNDTLLKDGASHAFAQYNKDQLTPVRIEGTDHNAIISEHNDLGNGRFYDPRTKQAFKYDHLRKEASDYQDVEADATAEPWRAALDLETLAYTASHYRHGVSSVFGKAQGNQITLTICIEDHQFQPKNYWNGRWRSQWHVTFQAGSGTAELKGVLKVQVHYYEDGNVQLVSSKECRESVVVSNEQQVAKEVIRLIEDAENEYQLAISENYQTMSDTTFKAMRRQLPITRTKIDWSKIVSYSIGKELKTQ</sequence>